<gene>
    <name type="primary">LAC18</name>
    <name type="ordered locus">Os11g0264000</name>
    <name type="ordered locus">LOC_Os11g16260</name>
    <name type="ORF">OsJ_032226</name>
</gene>
<feature type="signal peptide" evidence="2">
    <location>
        <begin position="1"/>
        <end position="29"/>
    </location>
</feature>
<feature type="chain" id="PRO_0000291903" description="Laccase-18">
    <location>
        <begin position="30"/>
        <end position="595"/>
    </location>
</feature>
<feature type="domain" description="Plastocyanin-like 1">
    <location>
        <begin position="37"/>
        <end position="153"/>
    </location>
</feature>
<feature type="domain" description="Plastocyanin-like 2">
    <location>
        <begin position="162"/>
        <end position="316"/>
    </location>
</feature>
<feature type="domain" description="Plastocyanin-like 3">
    <location>
        <begin position="429"/>
        <end position="571"/>
    </location>
</feature>
<feature type="region of interest" description="Disordered" evidence="3">
    <location>
        <begin position="570"/>
        <end position="595"/>
    </location>
</feature>
<feature type="binding site" evidence="1">
    <location>
        <position position="87"/>
    </location>
    <ligand>
        <name>Cu cation</name>
        <dbReference type="ChEBI" id="CHEBI:23378"/>
        <label>1</label>
    </ligand>
</feature>
<feature type="binding site" evidence="1">
    <location>
        <position position="89"/>
    </location>
    <ligand>
        <name>Cu cation</name>
        <dbReference type="ChEBI" id="CHEBI:23378"/>
        <label>2</label>
    </ligand>
</feature>
<feature type="binding site" evidence="1">
    <location>
        <position position="132"/>
    </location>
    <ligand>
        <name>Cu cation</name>
        <dbReference type="ChEBI" id="CHEBI:23378"/>
        <label>2</label>
    </ligand>
</feature>
<feature type="binding site" evidence="1">
    <location>
        <position position="134"/>
    </location>
    <ligand>
        <name>Cu cation</name>
        <dbReference type="ChEBI" id="CHEBI:23378"/>
        <label>3</label>
    </ligand>
</feature>
<feature type="binding site" evidence="2">
    <location>
        <position position="488"/>
    </location>
    <ligand>
        <name>Cu cation</name>
        <dbReference type="ChEBI" id="CHEBI:23378"/>
        <label>4</label>
    </ligand>
</feature>
<feature type="binding site" evidence="1">
    <location>
        <position position="491"/>
    </location>
    <ligand>
        <name>Cu cation</name>
        <dbReference type="ChEBI" id="CHEBI:23378"/>
        <label>1</label>
    </ligand>
</feature>
<feature type="binding site" evidence="1">
    <location>
        <position position="493"/>
    </location>
    <ligand>
        <name>Cu cation</name>
        <dbReference type="ChEBI" id="CHEBI:23378"/>
        <label>3</label>
    </ligand>
</feature>
<feature type="binding site" evidence="1">
    <location>
        <position position="550"/>
    </location>
    <ligand>
        <name>Cu cation</name>
        <dbReference type="ChEBI" id="CHEBI:23378"/>
        <label>3</label>
    </ligand>
</feature>
<feature type="binding site" evidence="2">
    <location>
        <position position="551"/>
    </location>
    <ligand>
        <name>Cu cation</name>
        <dbReference type="ChEBI" id="CHEBI:23378"/>
        <label>4</label>
    </ligand>
</feature>
<feature type="binding site" evidence="1">
    <location>
        <position position="552"/>
    </location>
    <ligand>
        <name>Cu cation</name>
        <dbReference type="ChEBI" id="CHEBI:23378"/>
        <label>2</label>
    </ligand>
</feature>
<feature type="binding site" evidence="2">
    <location>
        <position position="556"/>
    </location>
    <ligand>
        <name>Cu cation</name>
        <dbReference type="ChEBI" id="CHEBI:23378"/>
        <label>4</label>
    </ligand>
</feature>
<feature type="binding site" evidence="2">
    <location>
        <position position="561"/>
    </location>
    <ligand>
        <name>Cu cation</name>
        <dbReference type="ChEBI" id="CHEBI:23378"/>
        <label>4</label>
    </ligand>
</feature>
<feature type="glycosylation site" description="N-linked (GlcNAc...) asparagine" evidence="2">
    <location>
        <position position="42"/>
    </location>
</feature>
<feature type="glycosylation site" description="N-linked (GlcNAc...) asparagine" evidence="2">
    <location>
        <position position="48"/>
    </location>
</feature>
<feature type="glycosylation site" description="N-linked (GlcNAc...) asparagine" evidence="2">
    <location>
        <position position="121"/>
    </location>
</feature>
<feature type="glycosylation site" description="N-linked (GlcNAc...) asparagine" evidence="2">
    <location>
        <position position="206"/>
    </location>
</feature>
<feature type="glycosylation site" description="N-linked (GlcNAc...) asparagine" evidence="2">
    <location>
        <position position="345"/>
    </location>
</feature>
<feature type="glycosylation site" description="N-linked (GlcNAc...) asparagine" evidence="2">
    <location>
        <position position="382"/>
    </location>
</feature>
<feature type="glycosylation site" description="N-linked (GlcNAc...) asparagine" evidence="2">
    <location>
        <position position="402"/>
    </location>
</feature>
<feature type="glycosylation site" description="N-linked (GlcNAc...) asparagine" evidence="2">
    <location>
        <position position="409"/>
    </location>
</feature>
<feature type="glycosylation site" description="N-linked (GlcNAc...) asparagine" evidence="2">
    <location>
        <position position="439"/>
    </location>
</feature>
<feature type="glycosylation site" description="N-linked (GlcNAc...) asparagine" evidence="2">
    <location>
        <position position="470"/>
    </location>
</feature>
<proteinExistence type="evidence at transcript level"/>
<accession>Q53LU4</accession>
<accession>A0A0N7KSR0</accession>
<evidence type="ECO:0000250" key="1"/>
<evidence type="ECO:0000255" key="2"/>
<evidence type="ECO:0000256" key="3">
    <source>
        <dbReference type="SAM" id="MobiDB-lite"/>
    </source>
</evidence>
<evidence type="ECO:0000305" key="4"/>
<organism>
    <name type="scientific">Oryza sativa subsp. japonica</name>
    <name type="common">Rice</name>
    <dbReference type="NCBI Taxonomy" id="39947"/>
    <lineage>
        <taxon>Eukaryota</taxon>
        <taxon>Viridiplantae</taxon>
        <taxon>Streptophyta</taxon>
        <taxon>Embryophyta</taxon>
        <taxon>Tracheophyta</taxon>
        <taxon>Spermatophyta</taxon>
        <taxon>Magnoliopsida</taxon>
        <taxon>Liliopsida</taxon>
        <taxon>Poales</taxon>
        <taxon>Poaceae</taxon>
        <taxon>BOP clade</taxon>
        <taxon>Oryzoideae</taxon>
        <taxon>Oryzeae</taxon>
        <taxon>Oryzinae</taxon>
        <taxon>Oryza</taxon>
        <taxon>Oryza sativa</taxon>
    </lineage>
</organism>
<reference key="1">
    <citation type="journal article" date="2005" name="BMC Biol.">
        <title>The sequence of rice chromosomes 11 and 12, rich in disease resistance genes and recent gene duplications.</title>
        <authorList>
            <consortium name="The rice chromosomes 11 and 12 sequencing consortia"/>
        </authorList>
    </citation>
    <scope>NUCLEOTIDE SEQUENCE [LARGE SCALE GENOMIC DNA]</scope>
    <source>
        <strain>cv. Nipponbare</strain>
    </source>
</reference>
<reference key="2">
    <citation type="journal article" date="2005" name="Nature">
        <title>The map-based sequence of the rice genome.</title>
        <authorList>
            <consortium name="International rice genome sequencing project (IRGSP)"/>
        </authorList>
    </citation>
    <scope>NUCLEOTIDE SEQUENCE [LARGE SCALE GENOMIC DNA]</scope>
    <source>
        <strain>cv. Nipponbare</strain>
    </source>
</reference>
<reference key="3">
    <citation type="journal article" date="2008" name="Nucleic Acids Res.">
        <title>The rice annotation project database (RAP-DB): 2008 update.</title>
        <authorList>
            <consortium name="The rice annotation project (RAP)"/>
        </authorList>
    </citation>
    <scope>GENOME REANNOTATION</scope>
    <source>
        <strain>cv. Nipponbare</strain>
    </source>
</reference>
<reference key="4">
    <citation type="journal article" date="2013" name="Rice">
        <title>Improvement of the Oryza sativa Nipponbare reference genome using next generation sequence and optical map data.</title>
        <authorList>
            <person name="Kawahara Y."/>
            <person name="de la Bastide M."/>
            <person name="Hamilton J.P."/>
            <person name="Kanamori H."/>
            <person name="McCombie W.R."/>
            <person name="Ouyang S."/>
            <person name="Schwartz D.C."/>
            <person name="Tanaka T."/>
            <person name="Wu J."/>
            <person name="Zhou S."/>
            <person name="Childs K.L."/>
            <person name="Davidson R.M."/>
            <person name="Lin H."/>
            <person name="Quesada-Ocampo L."/>
            <person name="Vaillancourt B."/>
            <person name="Sakai H."/>
            <person name="Lee S.S."/>
            <person name="Kim J."/>
            <person name="Numa H."/>
            <person name="Itoh T."/>
            <person name="Buell C.R."/>
            <person name="Matsumoto T."/>
        </authorList>
    </citation>
    <scope>GENOME REANNOTATION</scope>
    <source>
        <strain>cv. Nipponbare</strain>
    </source>
</reference>
<reference key="5">
    <citation type="journal article" date="2005" name="PLoS Biol.">
        <title>The genomes of Oryza sativa: a history of duplications.</title>
        <authorList>
            <person name="Yu J."/>
            <person name="Wang J."/>
            <person name="Lin W."/>
            <person name="Li S."/>
            <person name="Li H."/>
            <person name="Zhou J."/>
            <person name="Ni P."/>
            <person name="Dong W."/>
            <person name="Hu S."/>
            <person name="Zeng C."/>
            <person name="Zhang J."/>
            <person name="Zhang Y."/>
            <person name="Li R."/>
            <person name="Xu Z."/>
            <person name="Li S."/>
            <person name="Li X."/>
            <person name="Zheng H."/>
            <person name="Cong L."/>
            <person name="Lin L."/>
            <person name="Yin J."/>
            <person name="Geng J."/>
            <person name="Li G."/>
            <person name="Shi J."/>
            <person name="Liu J."/>
            <person name="Lv H."/>
            <person name="Li J."/>
            <person name="Wang J."/>
            <person name="Deng Y."/>
            <person name="Ran L."/>
            <person name="Shi X."/>
            <person name="Wang X."/>
            <person name="Wu Q."/>
            <person name="Li C."/>
            <person name="Ren X."/>
            <person name="Wang J."/>
            <person name="Wang X."/>
            <person name="Li D."/>
            <person name="Liu D."/>
            <person name="Zhang X."/>
            <person name="Ji Z."/>
            <person name="Zhao W."/>
            <person name="Sun Y."/>
            <person name="Zhang Z."/>
            <person name="Bao J."/>
            <person name="Han Y."/>
            <person name="Dong L."/>
            <person name="Ji J."/>
            <person name="Chen P."/>
            <person name="Wu S."/>
            <person name="Liu J."/>
            <person name="Xiao Y."/>
            <person name="Bu D."/>
            <person name="Tan J."/>
            <person name="Yang L."/>
            <person name="Ye C."/>
            <person name="Zhang J."/>
            <person name="Xu J."/>
            <person name="Zhou Y."/>
            <person name="Yu Y."/>
            <person name="Zhang B."/>
            <person name="Zhuang S."/>
            <person name="Wei H."/>
            <person name="Liu B."/>
            <person name="Lei M."/>
            <person name="Yu H."/>
            <person name="Li Y."/>
            <person name="Xu H."/>
            <person name="Wei S."/>
            <person name="He X."/>
            <person name="Fang L."/>
            <person name="Zhang Z."/>
            <person name="Zhang Y."/>
            <person name="Huang X."/>
            <person name="Su Z."/>
            <person name="Tong W."/>
            <person name="Li J."/>
            <person name="Tong Z."/>
            <person name="Li S."/>
            <person name="Ye J."/>
            <person name="Wang L."/>
            <person name="Fang L."/>
            <person name="Lei T."/>
            <person name="Chen C.-S."/>
            <person name="Chen H.-C."/>
            <person name="Xu Z."/>
            <person name="Li H."/>
            <person name="Huang H."/>
            <person name="Zhang F."/>
            <person name="Xu H."/>
            <person name="Li N."/>
            <person name="Zhao C."/>
            <person name="Li S."/>
            <person name="Dong L."/>
            <person name="Huang Y."/>
            <person name="Li L."/>
            <person name="Xi Y."/>
            <person name="Qi Q."/>
            <person name="Li W."/>
            <person name="Zhang B."/>
            <person name="Hu W."/>
            <person name="Zhang Y."/>
            <person name="Tian X."/>
            <person name="Jiao Y."/>
            <person name="Liang X."/>
            <person name="Jin J."/>
            <person name="Gao L."/>
            <person name="Zheng W."/>
            <person name="Hao B."/>
            <person name="Liu S.-M."/>
            <person name="Wang W."/>
            <person name="Yuan L."/>
            <person name="Cao M."/>
            <person name="McDermott J."/>
            <person name="Samudrala R."/>
            <person name="Wang J."/>
            <person name="Wong G.K.-S."/>
            <person name="Yang H."/>
        </authorList>
    </citation>
    <scope>NUCLEOTIDE SEQUENCE [LARGE SCALE GENOMIC DNA]</scope>
    <source>
        <strain>cv. Nipponbare</strain>
    </source>
</reference>
<sequence>MEKLSTAASLFCVVVAATALAMAVVGGEAAVVEQTFMVHEMNVTHLCNTTKIYVVNGRFPGPTVDVTEGDTVVVHVINRLPHGLTIHWHGVRQMRSCWADGAGYVTECPIHPGGEKTYRFNVTGQVGTLWWHAHVTCLRATINGAFIIRPRNGKYPFLTPAKDVPIIIGEWWELDLIELDRRMLDGNFDDNPLSATINGKLGDLSNCSSTVEESFVLDVKRGESYLLRVINTALFSEYYFKVAGHTFTVVGADGNYLTPYKTDMVTVAPGEAIDVLMFTDAPPAYYHMVALANQPPPPDLQIPQLTSRGLIRYAGAAMDSNNLPMPMPVMPDQHNTMPSYYFRRNLTGLALPEQQQRHRVPAHVDERLLITLGLGSICRGGNTTTCKRGRSPETVVVATMNNVSFHHTNATALLEHYYDGRPEGVYTEDFPVRPPRPFNYTDRELIPAGPLEAALEPTAKAMRLRRFRYNASVEIVFQSTTLLQSDSNPMHLHGYDVFVLAQGLGNFDPKRDVEKFNYHNPQLRNTVQVPRGGWAAVRFLADNPGMWYLHCHFEFHIIMGMATAFIVEDGPTPETSLPPPPPEFKRCGTNGLSQP</sequence>
<dbReference type="EC" id="1.10.3.2"/>
<dbReference type="EMBL" id="AC138197">
    <property type="protein sequence ID" value="AAX96096.1"/>
    <property type="molecule type" value="Genomic_DNA"/>
</dbReference>
<dbReference type="EMBL" id="DP000010">
    <property type="protein sequence ID" value="ABA92481.1"/>
    <property type="molecule type" value="Genomic_DNA"/>
</dbReference>
<dbReference type="EMBL" id="AP008217">
    <property type="protein sequence ID" value="BAF28013.2"/>
    <property type="status" value="ALT_SEQ"/>
    <property type="molecule type" value="Genomic_DNA"/>
</dbReference>
<dbReference type="EMBL" id="AP014967">
    <property type="protein sequence ID" value="BAT13514.1"/>
    <property type="molecule type" value="Genomic_DNA"/>
</dbReference>
<dbReference type="EMBL" id="CM000148">
    <property type="protein sequence ID" value="EAZ18017.1"/>
    <property type="molecule type" value="Genomic_DNA"/>
</dbReference>
<dbReference type="RefSeq" id="XP_015616738.1">
    <property type="nucleotide sequence ID" value="XM_015761252.1"/>
</dbReference>
<dbReference type="SMR" id="Q53LU4"/>
<dbReference type="STRING" id="39947.Q53LU4"/>
<dbReference type="GlyCosmos" id="Q53LU4">
    <property type="glycosylation" value="10 sites, No reported glycans"/>
</dbReference>
<dbReference type="PaxDb" id="39947-Q53LU4"/>
<dbReference type="EnsemblPlants" id="Os11t0264000-00">
    <property type="protein sequence ID" value="Os11t0264000-00"/>
    <property type="gene ID" value="Os11g0264000"/>
</dbReference>
<dbReference type="Gramene" id="Os11t0264000-00">
    <property type="protein sequence ID" value="Os11t0264000-00"/>
    <property type="gene ID" value="Os11g0264000"/>
</dbReference>
<dbReference type="KEGG" id="dosa:Os11g0264000"/>
<dbReference type="eggNOG" id="KOG1263">
    <property type="taxonomic scope" value="Eukaryota"/>
</dbReference>
<dbReference type="HOGENOM" id="CLU_006504_6_3_1"/>
<dbReference type="InParanoid" id="Q53LU4"/>
<dbReference type="OMA" id="MVHEMNV"/>
<dbReference type="OrthoDB" id="2121828at2759"/>
<dbReference type="Proteomes" id="UP000000763">
    <property type="component" value="Chromosome 11"/>
</dbReference>
<dbReference type="Proteomes" id="UP000007752">
    <property type="component" value="Chromosome 11"/>
</dbReference>
<dbReference type="Proteomes" id="UP000059680">
    <property type="component" value="Chromosome 11"/>
</dbReference>
<dbReference type="GO" id="GO:0048046">
    <property type="term" value="C:apoplast"/>
    <property type="evidence" value="ECO:0007669"/>
    <property type="project" value="UniProtKB-SubCell"/>
</dbReference>
<dbReference type="GO" id="GO:0005507">
    <property type="term" value="F:copper ion binding"/>
    <property type="evidence" value="ECO:0007669"/>
    <property type="project" value="InterPro"/>
</dbReference>
<dbReference type="GO" id="GO:0052716">
    <property type="term" value="F:hydroquinone:oxygen oxidoreductase activity"/>
    <property type="evidence" value="ECO:0007669"/>
    <property type="project" value="UniProtKB-EC"/>
</dbReference>
<dbReference type="GO" id="GO:0016491">
    <property type="term" value="F:oxidoreductase activity"/>
    <property type="evidence" value="ECO:0000318"/>
    <property type="project" value="GO_Central"/>
</dbReference>
<dbReference type="GO" id="GO:0046274">
    <property type="term" value="P:lignin catabolic process"/>
    <property type="evidence" value="ECO:0007669"/>
    <property type="project" value="UniProtKB-KW"/>
</dbReference>
<dbReference type="CDD" id="cd13849">
    <property type="entry name" value="CuRO_1_LCC_plant"/>
    <property type="match status" value="1"/>
</dbReference>
<dbReference type="CDD" id="cd13875">
    <property type="entry name" value="CuRO_2_LCC_plant"/>
    <property type="match status" value="1"/>
</dbReference>
<dbReference type="CDD" id="cd13897">
    <property type="entry name" value="CuRO_3_LCC_plant"/>
    <property type="match status" value="1"/>
</dbReference>
<dbReference type="Gene3D" id="2.60.40.420">
    <property type="entry name" value="Cupredoxins - blue copper proteins"/>
    <property type="match status" value="3"/>
</dbReference>
<dbReference type="InterPro" id="IPR011707">
    <property type="entry name" value="Cu-oxidase-like_N"/>
</dbReference>
<dbReference type="InterPro" id="IPR001117">
    <property type="entry name" value="Cu-oxidase_2nd"/>
</dbReference>
<dbReference type="InterPro" id="IPR011706">
    <property type="entry name" value="Cu-oxidase_C"/>
</dbReference>
<dbReference type="InterPro" id="IPR045087">
    <property type="entry name" value="Cu-oxidase_fam"/>
</dbReference>
<dbReference type="InterPro" id="IPR033138">
    <property type="entry name" value="Cu_oxidase_CS"/>
</dbReference>
<dbReference type="InterPro" id="IPR002355">
    <property type="entry name" value="Cu_oxidase_Cu_BS"/>
</dbReference>
<dbReference type="InterPro" id="IPR008972">
    <property type="entry name" value="Cupredoxin"/>
</dbReference>
<dbReference type="InterPro" id="IPR034288">
    <property type="entry name" value="CuRO_1_LCC"/>
</dbReference>
<dbReference type="InterPro" id="IPR034285">
    <property type="entry name" value="CuRO_2_LCC"/>
</dbReference>
<dbReference type="InterPro" id="IPR034289">
    <property type="entry name" value="CuRO_3_LCC"/>
</dbReference>
<dbReference type="InterPro" id="IPR017761">
    <property type="entry name" value="Laccase"/>
</dbReference>
<dbReference type="NCBIfam" id="TIGR03389">
    <property type="entry name" value="laccase"/>
    <property type="match status" value="1"/>
</dbReference>
<dbReference type="PANTHER" id="PTHR11709:SF86">
    <property type="entry name" value="LACCASE-18"/>
    <property type="match status" value="1"/>
</dbReference>
<dbReference type="PANTHER" id="PTHR11709">
    <property type="entry name" value="MULTI-COPPER OXIDASE"/>
    <property type="match status" value="1"/>
</dbReference>
<dbReference type="Pfam" id="PF00394">
    <property type="entry name" value="Cu-oxidase"/>
    <property type="match status" value="1"/>
</dbReference>
<dbReference type="Pfam" id="PF07731">
    <property type="entry name" value="Cu-oxidase_2"/>
    <property type="match status" value="1"/>
</dbReference>
<dbReference type="Pfam" id="PF07732">
    <property type="entry name" value="Cu-oxidase_3"/>
    <property type="match status" value="1"/>
</dbReference>
<dbReference type="SUPFAM" id="SSF49503">
    <property type="entry name" value="Cupredoxins"/>
    <property type="match status" value="3"/>
</dbReference>
<dbReference type="PROSITE" id="PS00079">
    <property type="entry name" value="MULTICOPPER_OXIDASE1"/>
    <property type="match status" value="1"/>
</dbReference>
<dbReference type="PROSITE" id="PS00080">
    <property type="entry name" value="MULTICOPPER_OXIDASE2"/>
    <property type="match status" value="1"/>
</dbReference>
<keyword id="KW-0052">Apoplast</keyword>
<keyword id="KW-0186">Copper</keyword>
<keyword id="KW-0325">Glycoprotein</keyword>
<keyword id="KW-0439">Lignin degradation</keyword>
<keyword id="KW-0479">Metal-binding</keyword>
<keyword id="KW-0560">Oxidoreductase</keyword>
<keyword id="KW-1185">Reference proteome</keyword>
<keyword id="KW-0677">Repeat</keyword>
<keyword id="KW-0964">Secreted</keyword>
<keyword id="KW-0732">Signal</keyword>
<name>LAC18_ORYSJ</name>
<protein>
    <recommendedName>
        <fullName>Laccase-18</fullName>
        <ecNumber>1.10.3.2</ecNumber>
    </recommendedName>
    <alternativeName>
        <fullName>Benzenediol:oxygen oxidoreductase 18</fullName>
    </alternativeName>
    <alternativeName>
        <fullName>Diphenol oxidase 18</fullName>
    </alternativeName>
    <alternativeName>
        <fullName>Urishiol oxidase 18</fullName>
    </alternativeName>
</protein>
<comment type="function">
    <text evidence="1">Lignin degradation and detoxification of lignin-derived products.</text>
</comment>
<comment type="catalytic activity">
    <reaction>
        <text>4 hydroquinone + O2 = 4 benzosemiquinone + 2 H2O</text>
        <dbReference type="Rhea" id="RHEA:11276"/>
        <dbReference type="ChEBI" id="CHEBI:15377"/>
        <dbReference type="ChEBI" id="CHEBI:15379"/>
        <dbReference type="ChEBI" id="CHEBI:17594"/>
        <dbReference type="ChEBI" id="CHEBI:17977"/>
        <dbReference type="EC" id="1.10.3.2"/>
    </reaction>
</comment>
<comment type="cofactor">
    <cofactor evidence="1">
        <name>Cu cation</name>
        <dbReference type="ChEBI" id="CHEBI:23378"/>
    </cofactor>
    <text evidence="1">Binds 4 Cu cations per monomer.</text>
</comment>
<comment type="subcellular location">
    <subcellularLocation>
        <location evidence="4">Secreted</location>
        <location evidence="4">Extracellular space</location>
        <location evidence="4">Apoplast</location>
    </subcellularLocation>
</comment>
<comment type="similarity">
    <text evidence="4">Belongs to the multicopper oxidase family.</text>
</comment>
<comment type="sequence caution" evidence="4">
    <conflict type="erroneous gene model prediction">
        <sequence resource="EMBL-CDS" id="BAF28013"/>
    </conflict>
</comment>